<keyword id="KW-0024">Alternative initiation</keyword>
<keyword id="KW-0175">Coiled coil</keyword>
<keyword id="KW-1035">Host cytoplasm</keyword>
<keyword id="KW-0694">RNA-binding</keyword>
<dbReference type="EMBL" id="AF174383">
    <property type="protein sequence ID" value="AAF13170.1"/>
    <property type="molecule type" value="mRNA"/>
</dbReference>
<dbReference type="SMR" id="Q9PY82"/>
<dbReference type="Proteomes" id="UP000006370">
    <property type="component" value="Genome"/>
</dbReference>
<dbReference type="GO" id="GO:0030430">
    <property type="term" value="C:host cell cytoplasm"/>
    <property type="evidence" value="ECO:0007669"/>
    <property type="project" value="UniProtKB-SubCell"/>
</dbReference>
<dbReference type="GO" id="GO:0003723">
    <property type="term" value="F:RNA binding"/>
    <property type="evidence" value="ECO:0007669"/>
    <property type="project" value="UniProtKB-KW"/>
</dbReference>
<name>MUNS_REOVJ</name>
<feature type="chain" id="PRO_0000345002" description="Protein mu-NS">
    <location>
        <begin position="1"/>
        <end position="721"/>
    </location>
</feature>
<feature type="region of interest" description="RNA-binding" evidence="2">
    <location>
        <begin position="1"/>
        <end position="38"/>
    </location>
</feature>
<feature type="region of interest" description="Interaction with sigma-NS" evidence="3">
    <location>
        <begin position="1"/>
        <end position="13"/>
    </location>
</feature>
<feature type="region of interest" description="Interaction with mu-2" evidence="3">
    <location>
        <begin position="14"/>
        <end position="40"/>
    </location>
</feature>
<feature type="region of interest" description="Disordered" evidence="5">
    <location>
        <begin position="17"/>
        <end position="37"/>
    </location>
</feature>
<feature type="region of interest" description="Involved in the formation of factory-like inclusions" evidence="3">
    <location>
        <begin position="471"/>
        <end position="721"/>
    </location>
</feature>
<feature type="coiled-coil region" evidence="4">
    <location>
        <begin position="523"/>
        <end position="556"/>
    </location>
</feature>
<feature type="coiled-coil region" evidence="4">
    <location>
        <begin position="632"/>
        <end position="686"/>
    </location>
</feature>
<feature type="site" description="Important for the formation of viral factories" evidence="3">
    <location>
        <position position="570"/>
    </location>
</feature>
<feature type="site" description="Important for the formation of viral factories" evidence="3">
    <location>
        <position position="572"/>
    </location>
</feature>
<feature type="splice variant" id="VSP_034869" description="In isoform mu-NSC." evidence="8">
    <location>
        <begin position="1"/>
        <end position="40"/>
    </location>
</feature>
<feature type="mutagenesis site" description="Loss of stress granule localization and loss of interaction with outer capsid protein lambda-2." evidence="6">
    <original>VR</original>
    <variation>LK</variation>
    <location>
        <begin position="78"/>
        <end position="79"/>
    </location>
</feature>
<protein>
    <recommendedName>
        <fullName>Protein mu-NS</fullName>
        <shortName>MuNS</shortName>
    </recommendedName>
</protein>
<organismHost>
    <name type="scientific">Mammalia</name>
    <dbReference type="NCBI Taxonomy" id="40674"/>
</organismHost>
<comment type="function">
    <text evidence="3">Non-structural protein implicated with protein sigma-NS in forming the matrix of viral factories, which are large inclusions in the host cytoplasm where replication intermediates are assembled and viral RNA replication takes place (By similarity). Together with mu-2, recruits the other core proteins to these factories (By similarity).</text>
</comment>
<comment type="subunit">
    <text evidence="3 7">Interacts with mu-2 (By similarity). Interacts with sigma-NS; in viral factories (PubMed:28794026). Interacts with the inner capsid proteins lambda-1 and sigma-2, and outer capsid protein lambda-2; in viral factories (By similarity).</text>
</comment>
<comment type="subcellular location">
    <subcellularLocation>
        <location evidence="6">Host cytoplasm</location>
    </subcellularLocation>
    <text evidence="6">Localizes to the viral factories formed by mu-NS and sigma-NS (PubMed:24314644). Localizes to the host stress granules (PubMed:24314644).</text>
</comment>
<comment type="alternative products">
    <event type="alternative initiation"/>
    <isoform>
        <id>Q9PY82-1</id>
        <name>mu-NS</name>
        <sequence type="displayed"/>
    </isoform>
    <isoform>
        <id>Q9PY82-2</id>
        <name>mu-NSC</name>
        <sequence type="described" ref="VSP_034869"/>
    </isoform>
</comment>
<comment type="domain">
    <text evidence="3">The C-terminus is involved in the formation of factory-like inclusions.</text>
</comment>
<comment type="PTM">
    <text evidence="1">The N-terminus is blocked.</text>
</comment>
<comment type="miscellaneous">
    <molecule>Isoform mu-NSC</molecule>
    <text evidence="8">It is unsure whether Met-41 is the initiator.</text>
</comment>
<comment type="similarity">
    <text evidence="8">Belongs to the orthoreovirus mu-NS protein family.</text>
</comment>
<proteinExistence type="evidence at protein level"/>
<accession>Q9PY82</accession>
<evidence type="ECO:0000250" key="1"/>
<evidence type="ECO:0000250" key="2">
    <source>
        <dbReference type="UniProtKB" id="P12419"/>
    </source>
</evidence>
<evidence type="ECO:0000250" key="3">
    <source>
        <dbReference type="UniProtKB" id="Q9PY83"/>
    </source>
</evidence>
<evidence type="ECO:0000255" key="4"/>
<evidence type="ECO:0000256" key="5">
    <source>
        <dbReference type="SAM" id="MobiDB-lite"/>
    </source>
</evidence>
<evidence type="ECO:0000269" key="6">
    <source>
    </source>
</evidence>
<evidence type="ECO:0000269" key="7">
    <source>
    </source>
</evidence>
<evidence type="ECO:0000305" key="8"/>
<reference key="1">
    <citation type="journal article" date="1999" name="Virology">
        <title>Mammalian reovirus M3 gene sequences and conservation of coiled-coil motifs near the carboxyl terminus of the microNS protein.</title>
        <authorList>
            <person name="McCutcheon A.M."/>
            <person name="Broering T.J."/>
            <person name="Nibert M.L."/>
        </authorList>
    </citation>
    <scope>NUCLEOTIDE SEQUENCE [GENOMIC RNA]</scope>
    <scope>ALTERNATIVE INITIATION</scope>
</reference>
<reference key="2">
    <citation type="journal article" date="2014" name="Virology">
        <title>Amino acids 78 and 79 of Mammalian Orthoreovirus protein uNS are necessary for stress granule localization, core protein lambda2 interaction, and de novo virus replication.</title>
        <authorList>
            <person name="Carroll K."/>
            <person name="Hastings C."/>
            <person name="Miller C.L."/>
        </authorList>
    </citation>
    <scope>MUTAGENESIS OF 78-VAL-ARG-79</scope>
    <scope>SUBCELLULAR LOCATION</scope>
</reference>
<reference key="3">
    <citation type="journal article" date="2017" name="J. Virol.">
        <title>Mammalian Orthoreovirus Factories Modulate Stress Granule Protein Localization by Interaction with G3BP1.</title>
        <authorList>
            <person name="Choudhury P."/>
            <person name="Bussiere L.D."/>
            <person name="Miller C.L."/>
        </authorList>
    </citation>
    <scope>INTERACTION WITH PROTEIN SIGMA-NS</scope>
    <scope>SUBCELLULAR LOCATION</scope>
</reference>
<sequence length="721" mass="80505">MASFKGFSANTVPVSKTRKDTSSLTATPGLRAPSMSSPVDMAQSREFLTKAIEHGSMSIPYQHVNVPKVDRKVVSLVVRPFSAGAFSISGVISPAHAYLLECLPQLEQAMAFVASPEAFQASDVAKRFTIKPGMSLQDAITAFINFVSAMLKMTVTRQNFDVIIAEIERLASSGVVNRTEEAKVADEELMLFGLDHRAPQQIDVSEPVGISRAVEIQTTNNVHLAPGLGNIDPEIYNEGRFMFMQHKPLAADQSYFTTETADYFKIYPTYDEHDGRMVDQKQSGLILCTKDEVLAEQTIFKLDVPDDKTVHLLDRDDDHVVARFTRVFIEDVAPSHHAAQRSNQRSLLDDLYANTQVVSVTPSALRWVIKHGVSDGIVNRKNVKICVGFDPLYTLATSNGLSLCSILMDEKLSVLNSACKMTLRSLLKTHRDLDLHRAFQRVISQSYASLMCYYHPSRKLAYGELLFMSSQSDTVDGIKLQLDASRQCHECPLLQQKIVELEKHLIVQKSASSDPTPVALQPLLSQLRELSSEVTRLQMDLSRTQAINTRLEADVKSAQSCSLDMYLKHHTCINSHVKEDELMDAVRIAPDVRQELMLKRKATRQEWWERIARETSTTFQSKIDELTLMNGKQAHEISELRDSVTNYEKQVAELVSTITQNQTTYQQELQALVAKNIELDALNQRQAKSVRITSSLLSATPIDAVDGASDLIDFSVPADEL</sequence>
<organism>
    <name type="scientific">Reovirus type 2 (strain D5/Jones)</name>
    <name type="common">T2J</name>
    <name type="synonym">Mammalian orthoreovirus 2</name>
    <dbReference type="NCBI Taxonomy" id="10885"/>
    <lineage>
        <taxon>Viruses</taxon>
        <taxon>Riboviria</taxon>
        <taxon>Orthornavirae</taxon>
        <taxon>Duplornaviricota</taxon>
        <taxon>Resentoviricetes</taxon>
        <taxon>Reovirales</taxon>
        <taxon>Spinareoviridae</taxon>
        <taxon>Orthoreovirus</taxon>
        <taxon>Mammalian orthoreovirus</taxon>
    </lineage>
</organism>
<gene>
    <name type="primary">M3</name>
</gene>